<accession>P06459</accession>
<sequence length="91" mass="10173">MADDSALHKKYPFLNLLHTPPHRPPPLCPQAPRKTQCKRRLGNEHEESNSPLATPCVWPTLDPWTVETTTSSLTITTSTKDGTTVTVQLRL</sequence>
<protein>
    <recommendedName>
        <fullName>Protein E4</fullName>
    </recommendedName>
    <alternativeName>
        <fullName>E1^E4</fullName>
    </alternativeName>
</protein>
<organism>
    <name type="scientific">Human papillomavirus type 6b</name>
    <dbReference type="NCBI Taxonomy" id="10600"/>
    <lineage>
        <taxon>Viruses</taxon>
        <taxon>Monodnaviria</taxon>
        <taxon>Shotokuvirae</taxon>
        <taxon>Cossaviricota</taxon>
        <taxon>Papovaviricetes</taxon>
        <taxon>Zurhausenvirales</taxon>
        <taxon>Papillomaviridae</taxon>
        <taxon>Firstpapillomavirinae</taxon>
        <taxon>Alphapapillomavirus</taxon>
        <taxon>Alphapapillomavirus 10</taxon>
    </lineage>
</organism>
<organismHost>
    <name type="scientific">Homo sapiens</name>
    <name type="common">Human</name>
    <dbReference type="NCBI Taxonomy" id="9606"/>
</organismHost>
<reference key="1">
    <citation type="journal article" date="1983" name="EMBO J.">
        <title>DNA sequence and genome organization of genital human papillomavirus type 6b.</title>
        <authorList>
            <person name="Schwarz E."/>
            <person name="Durst M."/>
            <person name="Demankowski C."/>
            <person name="Lattermann O."/>
            <person name="Zech R."/>
            <person name="Wolfsperger E."/>
            <person name="Suhai S."/>
            <person name="zur Hausen H."/>
        </authorList>
    </citation>
    <scope>NUCLEOTIDE SEQUENCE [GENOMIC DNA]</scope>
</reference>
<reference key="2">
    <citation type="unpublished observations" date="1998-02">
        <authorList>
            <person name="Desaintes C."/>
        </authorList>
    </citation>
    <scope>CONCEPTUAL TRANSLATION</scope>
</reference>
<keyword id="KW-0244">Early protein</keyword>
<keyword id="KW-1035">Host cytoplasm</keyword>
<keyword id="KW-1079">Host G2/M cell cycle arrest by virus</keyword>
<keyword id="KW-1048">Host nucleus</keyword>
<keyword id="KW-0945">Host-virus interaction</keyword>
<keyword id="KW-1121">Modulation of host cell cycle by virus</keyword>
<keyword id="KW-0597">Phosphoprotein</keyword>
<comment type="function">
    <text>Associates with keratin intermediate filaments in certain epithelial cells in culture.</text>
</comment>
<comment type="function">
    <text evidence="1">Contributes to multiple aspects of the viral life cycle including viral genome amplification, suppression of suprabasal cell differentiation and egress of newly formed virions. Induces host cell cycle arrest at the G2 phase by associating with and preventing the nuclear entry of host CDK1/cyclin B1 complexes. Inhibits cellular DNA replication by preventing loading of host replication licensing proteins MCM2 and MCM7 onto chromatin. Within the cytoplasm, associates with host kinase SRPK1, a splicing factor regulator, and inhibits its activity. Therefore, E4 favors expression of late viral transcripts by inhibiting SRPK1-mediated phosphorylation of host serine-arginine (SR) proteins that have critical roles in mRNA metabolism. Late in the infectious cycle, E4 also acts to diminish the integrity of the keratinocyte by disrupting the keratin cytoskeleton and inducing apoptosis through alteration of mitochondrial function to facilitate egress of the newly formed virions.</text>
</comment>
<comment type="subunit">
    <text evidence="1">Assembles into oligomeric complexes. Interacts with host CDK1. Interacts with host SRPK1; this interaction may favor expression of late viral transcripts. Interacts with host cytokeratin components KRT8 and KRT18.</text>
</comment>
<comment type="subcellular location">
    <subcellularLocation>
        <location evidence="1">Host cytoplasm</location>
    </subcellularLocation>
    <subcellularLocation>
        <location evidence="1">Host nucleus</location>
    </subcellularLocation>
</comment>
<comment type="PTM">
    <text evidence="1">Phosphorylated by host ERK. The phosphorylation triggers a structural change that enhances keratin binding and protein stability.</text>
</comment>
<comment type="miscellaneous">
    <text evidence="1">The major E4 form is first synthesized as an E1^E4 fusion protein from spliced E1^E4 transcripts, such that the first few amino acids of the E4 protein are derived from the N terminus of E1.</text>
</comment>
<comment type="similarity">
    <text evidence="3">Belongs to the papillomaviridae E4 protein family.</text>
</comment>
<comment type="sequence caution" evidence="3">
    <conflict type="erroneous initiation">
        <sequence resource="EMBL-CDS" id="CAA25022"/>
    </conflict>
</comment>
<dbReference type="EMBL" id="X00203">
    <property type="protein sequence ID" value="CAA25020.1"/>
    <property type="status" value="ALT_SEQ"/>
    <property type="molecule type" value="Genomic_DNA"/>
</dbReference>
<dbReference type="EMBL" id="X00203">
    <property type="protein sequence ID" value="CAA25022.1"/>
    <property type="status" value="ALT_SEQ"/>
    <property type="molecule type" value="Genomic_DNA"/>
</dbReference>
<dbReference type="PIR" id="C20558">
    <property type="entry name" value="W4WL6"/>
</dbReference>
<dbReference type="RefSeq" id="NP_040300.1">
    <property type="nucleotide sequence ID" value="NC_001355.1"/>
</dbReference>
<dbReference type="SMR" id="P06459"/>
<dbReference type="GeneID" id="1489365"/>
<dbReference type="KEGG" id="vg:1489363"/>
<dbReference type="KEGG" id="vg:1489365"/>
<dbReference type="OrthoDB" id="4795at10239"/>
<dbReference type="Proteomes" id="UP000007676">
    <property type="component" value="Genome"/>
</dbReference>
<dbReference type="GO" id="GO:0030430">
    <property type="term" value="C:host cell cytoplasm"/>
    <property type="evidence" value="ECO:0007669"/>
    <property type="project" value="UniProtKB-SubCell"/>
</dbReference>
<dbReference type="GO" id="GO:0042025">
    <property type="term" value="C:host cell nucleus"/>
    <property type="evidence" value="ECO:0007669"/>
    <property type="project" value="UniProtKB-SubCell"/>
</dbReference>
<dbReference type="GO" id="GO:0039592">
    <property type="term" value="P:symbiont-mediated arrest of host cell cycle during G2/M transition"/>
    <property type="evidence" value="ECO:0007669"/>
    <property type="project" value="UniProtKB-KW"/>
</dbReference>
<dbReference type="InterPro" id="IPR003861">
    <property type="entry name" value="Papilloma_E4"/>
</dbReference>
<dbReference type="Pfam" id="PF02711">
    <property type="entry name" value="Pap_E4"/>
    <property type="match status" value="1"/>
</dbReference>
<name>VE4_HPV6B</name>
<gene>
    <name type="primary">E4</name>
</gene>
<proteinExistence type="inferred from homology"/>
<evidence type="ECO:0000250" key="1">
    <source>
        <dbReference type="UniProtKB" id="P06922"/>
    </source>
</evidence>
<evidence type="ECO:0000256" key="2">
    <source>
        <dbReference type="SAM" id="MobiDB-lite"/>
    </source>
</evidence>
<evidence type="ECO:0000305" key="3"/>
<feature type="chain" id="PRO_0000133260" description="Protein E4">
    <location>
        <begin position="1"/>
        <end position="91"/>
    </location>
</feature>
<feature type="region of interest" description="Disordered" evidence="2">
    <location>
        <begin position="15"/>
        <end position="54"/>
    </location>
</feature>